<name>MLTF_SALTI</name>
<keyword id="KW-0998">Cell outer membrane</keyword>
<keyword id="KW-0961">Cell wall biogenesis/degradation</keyword>
<keyword id="KW-0456">Lyase</keyword>
<keyword id="KW-0472">Membrane</keyword>
<keyword id="KW-0732">Signal</keyword>
<sequence length="475" mass="53647">MKKLKINYLFIGILTLLLAAALWPSIPWFGKTENHIAAIQARGVLRVSTIDSPLTYSVINGKKYGLDYELAQQFANYLGVKLKVTVRQNISQLFDDLDNGNADLLAAGLVYDSARVKNYQPGPMYYSVSQQLVYRVGQYRPRSLATVNENQLTIAPGHVVVNDLQRLKETKFPDLSWKVDDKKGSTTLLEEVISGKLDYTIADSVAISLFQRVHPELAVALDVTDEQPVTWFSRLDDDNTLSAALLDFFNSINEDGSLARIEEKYLGHGDDFDYVDTRSFLRAVDNVLPELEPLFKKYAKEIDWRLLAAISYQESHWDPLATSPTGVRGLMMLTKNTAQSLGLTDRTDAEQSISGGARYLEDMMAKVPETVPEDERIWFALAAYNMGYAHMLDARSLTVKTKGNPDSWTDVKQRLPLLSQKPYYSKLTYGYARGHEAYAYVENIRKYQISLVGYLQEKEKQEAEAMKLAQDYPAV</sequence>
<gene>
    <name evidence="1" type="primary">mltF</name>
    <name type="ordered locus">STY2813</name>
    <name type="ordered locus">t0290</name>
</gene>
<feature type="signal peptide" evidence="1">
    <location>
        <begin position="1"/>
        <end position="30"/>
    </location>
</feature>
<feature type="chain" id="PRO_0000353974" description="Membrane-bound lytic murein transglycosylase F">
    <location>
        <begin position="31"/>
        <end position="475"/>
    </location>
</feature>
<feature type="region of interest" description="Non-LT domain" evidence="1">
    <location>
        <begin position="31"/>
        <end position="269"/>
    </location>
</feature>
<feature type="region of interest" description="LT domain" evidence="1">
    <location>
        <begin position="270"/>
        <end position="475"/>
    </location>
</feature>
<feature type="active site" evidence="1">
    <location>
        <position position="314"/>
    </location>
</feature>
<protein>
    <recommendedName>
        <fullName evidence="1">Membrane-bound lytic murein transglycosylase F</fullName>
        <ecNumber evidence="1">4.2.2.n1</ecNumber>
    </recommendedName>
    <alternativeName>
        <fullName evidence="1">Murein lyase F</fullName>
    </alternativeName>
</protein>
<dbReference type="EC" id="4.2.2.n1" evidence="1"/>
<dbReference type="EMBL" id="AE014613">
    <property type="protein sequence ID" value="AAO68015.1"/>
    <property type="molecule type" value="Genomic_DNA"/>
</dbReference>
<dbReference type="EMBL" id="AL513382">
    <property type="protein sequence ID" value="CAD02769.1"/>
    <property type="molecule type" value="Genomic_DNA"/>
</dbReference>
<dbReference type="SMR" id="Q8Z4L5"/>
<dbReference type="STRING" id="220341.gene:17586703"/>
<dbReference type="KEGG" id="stt:t0290"/>
<dbReference type="KEGG" id="sty:STY2813"/>
<dbReference type="PATRIC" id="fig|90370.929.peg.4391"/>
<dbReference type="eggNOG" id="COG4623">
    <property type="taxonomic scope" value="Bacteria"/>
</dbReference>
<dbReference type="HOGENOM" id="CLU_027494_0_1_6"/>
<dbReference type="OMA" id="YYDILTW"/>
<dbReference type="OrthoDB" id="9815002at2"/>
<dbReference type="Proteomes" id="UP000000541">
    <property type="component" value="Chromosome"/>
</dbReference>
<dbReference type="Proteomes" id="UP000002670">
    <property type="component" value="Chromosome"/>
</dbReference>
<dbReference type="GO" id="GO:0009279">
    <property type="term" value="C:cell outer membrane"/>
    <property type="evidence" value="ECO:0007669"/>
    <property type="project" value="UniProtKB-SubCell"/>
</dbReference>
<dbReference type="GO" id="GO:0008933">
    <property type="term" value="F:peptidoglycan lytic transglycosylase activity"/>
    <property type="evidence" value="ECO:0007669"/>
    <property type="project" value="UniProtKB-UniRule"/>
</dbReference>
<dbReference type="GO" id="GO:0016998">
    <property type="term" value="P:cell wall macromolecule catabolic process"/>
    <property type="evidence" value="ECO:0007669"/>
    <property type="project" value="UniProtKB-UniRule"/>
</dbReference>
<dbReference type="GO" id="GO:0071555">
    <property type="term" value="P:cell wall organization"/>
    <property type="evidence" value="ECO:0007669"/>
    <property type="project" value="UniProtKB-KW"/>
</dbReference>
<dbReference type="GO" id="GO:0009253">
    <property type="term" value="P:peptidoglycan catabolic process"/>
    <property type="evidence" value="ECO:0007669"/>
    <property type="project" value="TreeGrafter"/>
</dbReference>
<dbReference type="CDD" id="cd13403">
    <property type="entry name" value="MLTF-like"/>
    <property type="match status" value="1"/>
</dbReference>
<dbReference type="CDD" id="cd01009">
    <property type="entry name" value="PBP2_YfhD_N"/>
    <property type="match status" value="1"/>
</dbReference>
<dbReference type="FunFam" id="1.10.530.10:FF:000003">
    <property type="entry name" value="Membrane-bound lytic murein transglycosylase F"/>
    <property type="match status" value="1"/>
</dbReference>
<dbReference type="FunFam" id="3.40.190.10:FF:000051">
    <property type="entry name" value="Membrane-bound lytic murein transglycosylase F"/>
    <property type="match status" value="1"/>
</dbReference>
<dbReference type="Gene3D" id="1.10.530.10">
    <property type="match status" value="1"/>
</dbReference>
<dbReference type="Gene3D" id="3.40.190.10">
    <property type="entry name" value="Periplasmic binding protein-like II"/>
    <property type="match status" value="2"/>
</dbReference>
<dbReference type="HAMAP" id="MF_02016">
    <property type="entry name" value="MltF"/>
    <property type="match status" value="1"/>
</dbReference>
<dbReference type="InterPro" id="IPR023346">
    <property type="entry name" value="Lysozyme-like_dom_sf"/>
</dbReference>
<dbReference type="InterPro" id="IPR023703">
    <property type="entry name" value="MltF"/>
</dbReference>
<dbReference type="InterPro" id="IPR001638">
    <property type="entry name" value="Solute-binding_3/MltF_N"/>
</dbReference>
<dbReference type="InterPro" id="IPR000189">
    <property type="entry name" value="Transglyc_AS"/>
</dbReference>
<dbReference type="InterPro" id="IPR008258">
    <property type="entry name" value="Transglycosylase_SLT_dom_1"/>
</dbReference>
<dbReference type="NCBIfam" id="NF008112">
    <property type="entry name" value="PRK10859.1"/>
    <property type="match status" value="1"/>
</dbReference>
<dbReference type="PANTHER" id="PTHR35936">
    <property type="entry name" value="MEMBRANE-BOUND LYTIC MUREIN TRANSGLYCOSYLASE F"/>
    <property type="match status" value="1"/>
</dbReference>
<dbReference type="PANTHER" id="PTHR35936:SF32">
    <property type="entry name" value="MEMBRANE-BOUND LYTIC MUREIN TRANSGLYCOSYLASE F"/>
    <property type="match status" value="1"/>
</dbReference>
<dbReference type="Pfam" id="PF00497">
    <property type="entry name" value="SBP_bac_3"/>
    <property type="match status" value="1"/>
</dbReference>
<dbReference type="Pfam" id="PF01464">
    <property type="entry name" value="SLT"/>
    <property type="match status" value="1"/>
</dbReference>
<dbReference type="SMART" id="SM00062">
    <property type="entry name" value="PBPb"/>
    <property type="match status" value="1"/>
</dbReference>
<dbReference type="SUPFAM" id="SSF53955">
    <property type="entry name" value="Lysozyme-like"/>
    <property type="match status" value="1"/>
</dbReference>
<dbReference type="SUPFAM" id="SSF53850">
    <property type="entry name" value="Periplasmic binding protein-like II"/>
    <property type="match status" value="1"/>
</dbReference>
<dbReference type="PROSITE" id="PS00922">
    <property type="entry name" value="TRANSGLYCOSYLASE"/>
    <property type="match status" value="1"/>
</dbReference>
<accession>Q8Z4L5</accession>
<accession>Q7CBM0</accession>
<proteinExistence type="inferred from homology"/>
<evidence type="ECO:0000255" key="1">
    <source>
        <dbReference type="HAMAP-Rule" id="MF_02016"/>
    </source>
</evidence>
<organism>
    <name type="scientific">Salmonella typhi</name>
    <dbReference type="NCBI Taxonomy" id="90370"/>
    <lineage>
        <taxon>Bacteria</taxon>
        <taxon>Pseudomonadati</taxon>
        <taxon>Pseudomonadota</taxon>
        <taxon>Gammaproteobacteria</taxon>
        <taxon>Enterobacterales</taxon>
        <taxon>Enterobacteriaceae</taxon>
        <taxon>Salmonella</taxon>
    </lineage>
</organism>
<comment type="function">
    <text evidence="1">Murein-degrading enzyme that degrades murein glycan strands and insoluble, high-molecular weight murein sacculi, with the concomitant formation of a 1,6-anhydromuramoyl product. Lytic transglycosylases (LTs) play an integral role in the metabolism of the peptidoglycan (PG) sacculus. Their lytic action creates space within the PG sacculus to allow for its expansion as well as for the insertion of various structures such as secretion systems and flagella.</text>
</comment>
<comment type="catalytic activity">
    <reaction evidence="1">
        <text>Exolytic cleavage of the (1-&gt;4)-beta-glycosidic linkage between N-acetylmuramic acid (MurNAc) and N-acetylglucosamine (GlcNAc) residues in peptidoglycan, from either the reducing or the non-reducing ends of the peptidoglycan chains, with concomitant formation of a 1,6-anhydrobond in the MurNAc residue.</text>
        <dbReference type="EC" id="4.2.2.n1"/>
    </reaction>
</comment>
<comment type="subcellular location">
    <subcellularLocation>
        <location>Cell outer membrane</location>
        <topology>Peripheral membrane protein</topology>
    </subcellularLocation>
    <text evidence="1">Attached to the inner leaflet of the outer membrane.</text>
</comment>
<comment type="domain">
    <text evidence="1">The N-terminal domain does not have lytic activity and probably modulates enzymatic activity. The C-terminal domain is the catalytic active domain.</text>
</comment>
<comment type="similarity">
    <text evidence="1">In the N-terminal section; belongs to the bacterial solute-binding protein 3 family.</text>
</comment>
<comment type="similarity">
    <text evidence="1">In the C-terminal section; belongs to the transglycosylase Slt family.</text>
</comment>
<reference key="1">
    <citation type="journal article" date="2001" name="Nature">
        <title>Complete genome sequence of a multiple drug resistant Salmonella enterica serovar Typhi CT18.</title>
        <authorList>
            <person name="Parkhill J."/>
            <person name="Dougan G."/>
            <person name="James K.D."/>
            <person name="Thomson N.R."/>
            <person name="Pickard D."/>
            <person name="Wain J."/>
            <person name="Churcher C.M."/>
            <person name="Mungall K.L."/>
            <person name="Bentley S.D."/>
            <person name="Holden M.T.G."/>
            <person name="Sebaihia M."/>
            <person name="Baker S."/>
            <person name="Basham D."/>
            <person name="Brooks K."/>
            <person name="Chillingworth T."/>
            <person name="Connerton P."/>
            <person name="Cronin A."/>
            <person name="Davis P."/>
            <person name="Davies R.M."/>
            <person name="Dowd L."/>
            <person name="White N."/>
            <person name="Farrar J."/>
            <person name="Feltwell T."/>
            <person name="Hamlin N."/>
            <person name="Haque A."/>
            <person name="Hien T.T."/>
            <person name="Holroyd S."/>
            <person name="Jagels K."/>
            <person name="Krogh A."/>
            <person name="Larsen T.S."/>
            <person name="Leather S."/>
            <person name="Moule S."/>
            <person name="O'Gaora P."/>
            <person name="Parry C."/>
            <person name="Quail M.A."/>
            <person name="Rutherford K.M."/>
            <person name="Simmonds M."/>
            <person name="Skelton J."/>
            <person name="Stevens K."/>
            <person name="Whitehead S."/>
            <person name="Barrell B.G."/>
        </authorList>
    </citation>
    <scope>NUCLEOTIDE SEQUENCE [LARGE SCALE GENOMIC DNA]</scope>
    <source>
        <strain>CT18</strain>
    </source>
</reference>
<reference key="2">
    <citation type="journal article" date="2003" name="J. Bacteriol.">
        <title>Comparative genomics of Salmonella enterica serovar Typhi strains Ty2 and CT18.</title>
        <authorList>
            <person name="Deng W."/>
            <person name="Liou S.-R."/>
            <person name="Plunkett G. III"/>
            <person name="Mayhew G.F."/>
            <person name="Rose D.J."/>
            <person name="Burland V."/>
            <person name="Kodoyianni V."/>
            <person name="Schwartz D.C."/>
            <person name="Blattner F.R."/>
        </authorList>
    </citation>
    <scope>NUCLEOTIDE SEQUENCE [LARGE SCALE GENOMIC DNA]</scope>
    <source>
        <strain>ATCC 700931 / Ty2</strain>
    </source>
</reference>